<gene>
    <name evidence="1" type="primary">rplE</name>
    <name type="ordered locus">Dole_0720</name>
</gene>
<sequence length="179" mass="20475">MSSFKEFYTTEVVPKLQETFGYKNVMQIPKLEKIVLNMGLGEAISNIKIIDSAVEELKLISGQQPVIRRARKSIAAFKLRQGMPVGCMVTLRHERMYDFFNKLVNIALPRVRDFRGISGQAFDGQGNYTLGVREQIIFPEIEYDKIDKIKGLNITIVTSVQKDDEARELLRLMGMPFKN</sequence>
<proteinExistence type="inferred from homology"/>
<dbReference type="EMBL" id="CP000859">
    <property type="protein sequence ID" value="ABW66530.1"/>
    <property type="molecule type" value="Genomic_DNA"/>
</dbReference>
<dbReference type="RefSeq" id="WP_012174148.1">
    <property type="nucleotide sequence ID" value="NC_009943.1"/>
</dbReference>
<dbReference type="SMR" id="A8ZV69"/>
<dbReference type="STRING" id="96561.Dole_0720"/>
<dbReference type="KEGG" id="dol:Dole_0720"/>
<dbReference type="eggNOG" id="COG0094">
    <property type="taxonomic scope" value="Bacteria"/>
</dbReference>
<dbReference type="HOGENOM" id="CLU_061015_2_1_7"/>
<dbReference type="OrthoDB" id="9806626at2"/>
<dbReference type="Proteomes" id="UP000008561">
    <property type="component" value="Chromosome"/>
</dbReference>
<dbReference type="GO" id="GO:1990904">
    <property type="term" value="C:ribonucleoprotein complex"/>
    <property type="evidence" value="ECO:0007669"/>
    <property type="project" value="UniProtKB-KW"/>
</dbReference>
<dbReference type="GO" id="GO:0005840">
    <property type="term" value="C:ribosome"/>
    <property type="evidence" value="ECO:0007669"/>
    <property type="project" value="UniProtKB-KW"/>
</dbReference>
<dbReference type="GO" id="GO:0019843">
    <property type="term" value="F:rRNA binding"/>
    <property type="evidence" value="ECO:0007669"/>
    <property type="project" value="UniProtKB-UniRule"/>
</dbReference>
<dbReference type="GO" id="GO:0003735">
    <property type="term" value="F:structural constituent of ribosome"/>
    <property type="evidence" value="ECO:0007669"/>
    <property type="project" value="InterPro"/>
</dbReference>
<dbReference type="GO" id="GO:0000049">
    <property type="term" value="F:tRNA binding"/>
    <property type="evidence" value="ECO:0007669"/>
    <property type="project" value="UniProtKB-UniRule"/>
</dbReference>
<dbReference type="GO" id="GO:0006412">
    <property type="term" value="P:translation"/>
    <property type="evidence" value="ECO:0007669"/>
    <property type="project" value="UniProtKB-UniRule"/>
</dbReference>
<dbReference type="FunFam" id="3.30.1440.10:FF:000001">
    <property type="entry name" value="50S ribosomal protein L5"/>
    <property type="match status" value="1"/>
</dbReference>
<dbReference type="Gene3D" id="3.30.1440.10">
    <property type="match status" value="1"/>
</dbReference>
<dbReference type="HAMAP" id="MF_01333_B">
    <property type="entry name" value="Ribosomal_uL5_B"/>
    <property type="match status" value="1"/>
</dbReference>
<dbReference type="InterPro" id="IPR002132">
    <property type="entry name" value="Ribosomal_uL5"/>
</dbReference>
<dbReference type="InterPro" id="IPR020930">
    <property type="entry name" value="Ribosomal_uL5_bac-type"/>
</dbReference>
<dbReference type="InterPro" id="IPR031309">
    <property type="entry name" value="Ribosomal_uL5_C"/>
</dbReference>
<dbReference type="InterPro" id="IPR022803">
    <property type="entry name" value="Ribosomal_uL5_dom_sf"/>
</dbReference>
<dbReference type="InterPro" id="IPR031310">
    <property type="entry name" value="Ribosomal_uL5_N"/>
</dbReference>
<dbReference type="NCBIfam" id="NF000585">
    <property type="entry name" value="PRK00010.1"/>
    <property type="match status" value="1"/>
</dbReference>
<dbReference type="PANTHER" id="PTHR11994">
    <property type="entry name" value="60S RIBOSOMAL PROTEIN L11-RELATED"/>
    <property type="match status" value="1"/>
</dbReference>
<dbReference type="Pfam" id="PF00281">
    <property type="entry name" value="Ribosomal_L5"/>
    <property type="match status" value="1"/>
</dbReference>
<dbReference type="Pfam" id="PF00673">
    <property type="entry name" value="Ribosomal_L5_C"/>
    <property type="match status" value="1"/>
</dbReference>
<dbReference type="PIRSF" id="PIRSF002161">
    <property type="entry name" value="Ribosomal_L5"/>
    <property type="match status" value="1"/>
</dbReference>
<dbReference type="SUPFAM" id="SSF55282">
    <property type="entry name" value="RL5-like"/>
    <property type="match status" value="1"/>
</dbReference>
<name>RL5_DESOH</name>
<comment type="function">
    <text evidence="1">This is one of the proteins that bind and probably mediate the attachment of the 5S RNA into the large ribosomal subunit, where it forms part of the central protuberance. In the 70S ribosome it contacts protein S13 of the 30S subunit (bridge B1b), connecting the 2 subunits; this bridge is implicated in subunit movement. Contacts the P site tRNA; the 5S rRNA and some of its associated proteins might help stabilize positioning of ribosome-bound tRNAs.</text>
</comment>
<comment type="subunit">
    <text evidence="1">Part of the 50S ribosomal subunit; part of the 5S rRNA/L5/L18/L25 subcomplex. Contacts the 5S rRNA and the P site tRNA. Forms a bridge to the 30S subunit in the 70S ribosome.</text>
</comment>
<comment type="similarity">
    <text evidence="1">Belongs to the universal ribosomal protein uL5 family.</text>
</comment>
<protein>
    <recommendedName>
        <fullName evidence="1">Large ribosomal subunit protein uL5</fullName>
    </recommendedName>
    <alternativeName>
        <fullName evidence="2">50S ribosomal protein L5</fullName>
    </alternativeName>
</protein>
<reference key="1">
    <citation type="submission" date="2007-10" db="EMBL/GenBank/DDBJ databases">
        <title>Complete sequence of Desulfococcus oleovorans Hxd3.</title>
        <authorList>
            <consortium name="US DOE Joint Genome Institute"/>
            <person name="Copeland A."/>
            <person name="Lucas S."/>
            <person name="Lapidus A."/>
            <person name="Barry K."/>
            <person name="Glavina del Rio T."/>
            <person name="Dalin E."/>
            <person name="Tice H."/>
            <person name="Pitluck S."/>
            <person name="Kiss H."/>
            <person name="Brettin T."/>
            <person name="Bruce D."/>
            <person name="Detter J.C."/>
            <person name="Han C."/>
            <person name="Schmutz J."/>
            <person name="Larimer F."/>
            <person name="Land M."/>
            <person name="Hauser L."/>
            <person name="Kyrpides N."/>
            <person name="Kim E."/>
            <person name="Wawrik B."/>
            <person name="Richardson P."/>
        </authorList>
    </citation>
    <scope>NUCLEOTIDE SEQUENCE [LARGE SCALE GENOMIC DNA]</scope>
    <source>
        <strain>DSM 6200 / JCM 39069 / Hxd3</strain>
    </source>
</reference>
<feature type="chain" id="PRO_1000142389" description="Large ribosomal subunit protein uL5">
    <location>
        <begin position="1"/>
        <end position="179"/>
    </location>
</feature>
<evidence type="ECO:0000255" key="1">
    <source>
        <dbReference type="HAMAP-Rule" id="MF_01333"/>
    </source>
</evidence>
<evidence type="ECO:0000305" key="2"/>
<organism>
    <name type="scientific">Desulfosudis oleivorans (strain DSM 6200 / JCM 39069 / Hxd3)</name>
    <name type="common">Desulfococcus oleovorans</name>
    <dbReference type="NCBI Taxonomy" id="96561"/>
    <lineage>
        <taxon>Bacteria</taxon>
        <taxon>Pseudomonadati</taxon>
        <taxon>Thermodesulfobacteriota</taxon>
        <taxon>Desulfobacteria</taxon>
        <taxon>Desulfobacterales</taxon>
        <taxon>Desulfosudaceae</taxon>
        <taxon>Desulfosudis</taxon>
    </lineage>
</organism>
<keyword id="KW-1185">Reference proteome</keyword>
<keyword id="KW-0687">Ribonucleoprotein</keyword>
<keyword id="KW-0689">Ribosomal protein</keyword>
<keyword id="KW-0694">RNA-binding</keyword>
<keyword id="KW-0699">rRNA-binding</keyword>
<keyword id="KW-0820">tRNA-binding</keyword>
<accession>A8ZV69</accession>